<reference key="1">
    <citation type="journal article" date="2009" name="Genome Res.">
        <title>Whole genome sequence of Desulfovibrio magneticus strain RS-1 revealed common gene clusters in magnetotactic bacteria.</title>
        <authorList>
            <person name="Nakazawa H."/>
            <person name="Arakaki A."/>
            <person name="Narita-Yamada S."/>
            <person name="Yashiro I."/>
            <person name="Jinno K."/>
            <person name="Aoki N."/>
            <person name="Tsuruyama A."/>
            <person name="Okamura Y."/>
            <person name="Tanikawa S."/>
            <person name="Fujita N."/>
            <person name="Takeyama H."/>
            <person name="Matsunaga T."/>
        </authorList>
    </citation>
    <scope>NUCLEOTIDE SEQUENCE [LARGE SCALE GENOMIC DNA]</scope>
    <source>
        <strain>ATCC 700980 / DSM 13731 / RS-1</strain>
    </source>
</reference>
<proteinExistence type="inferred from homology"/>
<accession>C4XIK0</accession>
<comment type="function">
    <text evidence="1">The RuvA-RuvB-RuvC complex processes Holliday junction (HJ) DNA during genetic recombination and DNA repair. Endonuclease that resolves HJ intermediates. Cleaves cruciform DNA by making single-stranded nicks across the HJ at symmetrical positions within the homologous arms, yielding a 5'-phosphate and a 3'-hydroxyl group; requires a central core of homology in the junction. The consensus cleavage sequence is 5'-(A/T)TT(C/G)-3'. Cleavage occurs on the 3'-side of the TT dinucleotide at the point of strand exchange. HJ branch migration catalyzed by RuvA-RuvB allows RuvC to scan DNA until it finds its consensus sequence, where it cleaves and resolves the cruciform DNA.</text>
</comment>
<comment type="catalytic activity">
    <reaction evidence="1">
        <text>Endonucleolytic cleavage at a junction such as a reciprocal single-stranded crossover between two homologous DNA duplexes (Holliday junction).</text>
        <dbReference type="EC" id="3.1.21.10"/>
    </reaction>
</comment>
<comment type="cofactor">
    <cofactor evidence="1">
        <name>Mg(2+)</name>
        <dbReference type="ChEBI" id="CHEBI:18420"/>
    </cofactor>
    <text evidence="1">Binds 2 Mg(2+) ion per subunit.</text>
</comment>
<comment type="subunit">
    <text evidence="1">Homodimer which binds Holliday junction (HJ) DNA. The HJ becomes 2-fold symmetrical on binding to RuvC with unstacked arms; it has a different conformation from HJ DNA in complex with RuvA. In the full resolvosome a probable DNA-RuvA(4)-RuvB(12)-RuvC(2) complex forms which resolves the HJ.</text>
</comment>
<comment type="subcellular location">
    <subcellularLocation>
        <location evidence="1">Cytoplasm</location>
    </subcellularLocation>
</comment>
<comment type="similarity">
    <text evidence="1">Belongs to the RuvC family.</text>
</comment>
<dbReference type="EC" id="3.1.21.10" evidence="1"/>
<dbReference type="EMBL" id="AP010904">
    <property type="protein sequence ID" value="BAH76575.1"/>
    <property type="molecule type" value="Genomic_DNA"/>
</dbReference>
<dbReference type="RefSeq" id="WP_015861734.1">
    <property type="nucleotide sequence ID" value="NC_012796.1"/>
</dbReference>
<dbReference type="SMR" id="C4XIK0"/>
<dbReference type="STRING" id="573370.DMR_30840"/>
<dbReference type="KEGG" id="dma:DMR_30840"/>
<dbReference type="eggNOG" id="COG0817">
    <property type="taxonomic scope" value="Bacteria"/>
</dbReference>
<dbReference type="HOGENOM" id="CLU_091257_3_1_7"/>
<dbReference type="OrthoDB" id="9805499at2"/>
<dbReference type="Proteomes" id="UP000009071">
    <property type="component" value="Chromosome"/>
</dbReference>
<dbReference type="GO" id="GO:0005737">
    <property type="term" value="C:cytoplasm"/>
    <property type="evidence" value="ECO:0007669"/>
    <property type="project" value="UniProtKB-SubCell"/>
</dbReference>
<dbReference type="GO" id="GO:0048476">
    <property type="term" value="C:Holliday junction resolvase complex"/>
    <property type="evidence" value="ECO:0007669"/>
    <property type="project" value="UniProtKB-UniRule"/>
</dbReference>
<dbReference type="GO" id="GO:0008821">
    <property type="term" value="F:crossover junction DNA endonuclease activity"/>
    <property type="evidence" value="ECO:0007669"/>
    <property type="project" value="UniProtKB-UniRule"/>
</dbReference>
<dbReference type="GO" id="GO:0003677">
    <property type="term" value="F:DNA binding"/>
    <property type="evidence" value="ECO:0007669"/>
    <property type="project" value="UniProtKB-KW"/>
</dbReference>
<dbReference type="GO" id="GO:0000287">
    <property type="term" value="F:magnesium ion binding"/>
    <property type="evidence" value="ECO:0007669"/>
    <property type="project" value="UniProtKB-UniRule"/>
</dbReference>
<dbReference type="GO" id="GO:0006310">
    <property type="term" value="P:DNA recombination"/>
    <property type="evidence" value="ECO:0007669"/>
    <property type="project" value="UniProtKB-UniRule"/>
</dbReference>
<dbReference type="GO" id="GO:0006281">
    <property type="term" value="P:DNA repair"/>
    <property type="evidence" value="ECO:0007669"/>
    <property type="project" value="UniProtKB-UniRule"/>
</dbReference>
<dbReference type="CDD" id="cd16962">
    <property type="entry name" value="RuvC"/>
    <property type="match status" value="1"/>
</dbReference>
<dbReference type="FunFam" id="3.30.420.10:FF:000002">
    <property type="entry name" value="Crossover junction endodeoxyribonuclease RuvC"/>
    <property type="match status" value="1"/>
</dbReference>
<dbReference type="Gene3D" id="3.30.420.10">
    <property type="entry name" value="Ribonuclease H-like superfamily/Ribonuclease H"/>
    <property type="match status" value="1"/>
</dbReference>
<dbReference type="HAMAP" id="MF_00034">
    <property type="entry name" value="RuvC"/>
    <property type="match status" value="1"/>
</dbReference>
<dbReference type="InterPro" id="IPR012337">
    <property type="entry name" value="RNaseH-like_sf"/>
</dbReference>
<dbReference type="InterPro" id="IPR036397">
    <property type="entry name" value="RNaseH_sf"/>
</dbReference>
<dbReference type="InterPro" id="IPR020563">
    <property type="entry name" value="X-over_junc_endoDNase_Mg_BS"/>
</dbReference>
<dbReference type="InterPro" id="IPR002176">
    <property type="entry name" value="X-over_junc_endoDNase_RuvC"/>
</dbReference>
<dbReference type="NCBIfam" id="TIGR00228">
    <property type="entry name" value="ruvC"/>
    <property type="match status" value="1"/>
</dbReference>
<dbReference type="PANTHER" id="PTHR30194">
    <property type="entry name" value="CROSSOVER JUNCTION ENDODEOXYRIBONUCLEASE RUVC"/>
    <property type="match status" value="1"/>
</dbReference>
<dbReference type="PANTHER" id="PTHR30194:SF3">
    <property type="entry name" value="CROSSOVER JUNCTION ENDODEOXYRIBONUCLEASE RUVC"/>
    <property type="match status" value="1"/>
</dbReference>
<dbReference type="Pfam" id="PF02075">
    <property type="entry name" value="RuvC"/>
    <property type="match status" value="1"/>
</dbReference>
<dbReference type="PRINTS" id="PR00696">
    <property type="entry name" value="RSOLVASERUVC"/>
</dbReference>
<dbReference type="SUPFAM" id="SSF53098">
    <property type="entry name" value="Ribonuclease H-like"/>
    <property type="match status" value="1"/>
</dbReference>
<dbReference type="PROSITE" id="PS01321">
    <property type="entry name" value="RUVC"/>
    <property type="match status" value="1"/>
</dbReference>
<gene>
    <name evidence="1" type="primary">ruvC</name>
    <name type="ordered locus">DMR_30840</name>
</gene>
<keyword id="KW-0963">Cytoplasm</keyword>
<keyword id="KW-0227">DNA damage</keyword>
<keyword id="KW-0233">DNA recombination</keyword>
<keyword id="KW-0234">DNA repair</keyword>
<keyword id="KW-0238">DNA-binding</keyword>
<keyword id="KW-0255">Endonuclease</keyword>
<keyword id="KW-0378">Hydrolase</keyword>
<keyword id="KW-0460">Magnesium</keyword>
<keyword id="KW-0479">Metal-binding</keyword>
<keyword id="KW-0540">Nuclease</keyword>
<evidence type="ECO:0000255" key="1">
    <source>
        <dbReference type="HAMAP-Rule" id="MF_00034"/>
    </source>
</evidence>
<organism>
    <name type="scientific">Solidesulfovibrio magneticus (strain ATCC 700980 / DSM 13731 / RS-1)</name>
    <name type="common">Desulfovibrio magneticus</name>
    <dbReference type="NCBI Taxonomy" id="573370"/>
    <lineage>
        <taxon>Bacteria</taxon>
        <taxon>Pseudomonadati</taxon>
        <taxon>Thermodesulfobacteriota</taxon>
        <taxon>Desulfovibrionia</taxon>
        <taxon>Desulfovibrionales</taxon>
        <taxon>Desulfovibrionaceae</taxon>
        <taxon>Solidesulfovibrio</taxon>
    </lineage>
</organism>
<name>RUVC_SOLM1</name>
<feature type="chain" id="PRO_1000202033" description="Crossover junction endodeoxyribonuclease RuvC">
    <location>
        <begin position="1"/>
        <end position="169"/>
    </location>
</feature>
<feature type="active site" evidence="1">
    <location>
        <position position="13"/>
    </location>
</feature>
<feature type="active site" evidence="1">
    <location>
        <position position="73"/>
    </location>
</feature>
<feature type="active site" evidence="1">
    <location>
        <position position="145"/>
    </location>
</feature>
<feature type="binding site" evidence="1">
    <location>
        <position position="13"/>
    </location>
    <ligand>
        <name>Mg(2+)</name>
        <dbReference type="ChEBI" id="CHEBI:18420"/>
        <label>1</label>
    </ligand>
</feature>
<feature type="binding site" evidence="1">
    <location>
        <position position="73"/>
    </location>
    <ligand>
        <name>Mg(2+)</name>
        <dbReference type="ChEBI" id="CHEBI:18420"/>
        <label>2</label>
    </ligand>
</feature>
<feature type="binding site" evidence="1">
    <location>
        <position position="145"/>
    </location>
    <ligand>
        <name>Mg(2+)</name>
        <dbReference type="ChEBI" id="CHEBI:18420"/>
        <label>1</label>
    </ligand>
</feature>
<protein>
    <recommendedName>
        <fullName evidence="1">Crossover junction endodeoxyribonuclease RuvC</fullName>
        <ecNumber evidence="1">3.1.21.10</ecNumber>
    </recommendedName>
    <alternativeName>
        <fullName evidence="1">Holliday junction nuclease RuvC</fullName>
    </alternativeName>
    <alternativeName>
        <fullName evidence="1">Holliday junction resolvase RuvC</fullName>
    </alternativeName>
</protein>
<sequence length="169" mass="17587">MANTGDGIILGLDPGSRATGYGLVRERSGVLELVDAGVVRTTSQPDFPSRLGVIFTAVAELIQRHGPAEVSVENVFVSKNAATALKLGQARGAALAACAVAGLSVHSYEPTVIKQSLVGTGRAEKSQVAFMVARVLACRETFAVDATDALAAAVCHLNQRRLTRLCGAR</sequence>